<gene>
    <name evidence="1" type="primary">rlmH</name>
    <name type="ordered locus">BMA10229_A0797</name>
</gene>
<reference key="1">
    <citation type="journal article" date="2010" name="Genome Biol. Evol.">
        <title>Continuing evolution of Burkholderia mallei through genome reduction and large-scale rearrangements.</title>
        <authorList>
            <person name="Losada L."/>
            <person name="Ronning C.M."/>
            <person name="DeShazer D."/>
            <person name="Woods D."/>
            <person name="Fedorova N."/>
            <person name="Kim H.S."/>
            <person name="Shabalina S.A."/>
            <person name="Pearson T.R."/>
            <person name="Brinkac L."/>
            <person name="Tan P."/>
            <person name="Nandi T."/>
            <person name="Crabtree J."/>
            <person name="Badger J."/>
            <person name="Beckstrom-Sternberg S."/>
            <person name="Saqib M."/>
            <person name="Schutzer S.E."/>
            <person name="Keim P."/>
            <person name="Nierman W.C."/>
        </authorList>
    </citation>
    <scope>NUCLEOTIDE SEQUENCE [LARGE SCALE GENOMIC DNA]</scope>
    <source>
        <strain>NCTC 10229</strain>
    </source>
</reference>
<organism>
    <name type="scientific">Burkholderia mallei (strain NCTC 10229)</name>
    <dbReference type="NCBI Taxonomy" id="412022"/>
    <lineage>
        <taxon>Bacteria</taxon>
        <taxon>Pseudomonadati</taxon>
        <taxon>Pseudomonadota</taxon>
        <taxon>Betaproteobacteria</taxon>
        <taxon>Burkholderiales</taxon>
        <taxon>Burkholderiaceae</taxon>
        <taxon>Burkholderia</taxon>
        <taxon>pseudomallei group</taxon>
    </lineage>
</organism>
<feature type="chain" id="PRO_1000061765" description="Ribosomal RNA large subunit methyltransferase H">
    <location>
        <begin position="1"/>
        <end position="156"/>
    </location>
</feature>
<feature type="binding site" evidence="1">
    <location>
        <position position="73"/>
    </location>
    <ligand>
        <name>S-adenosyl-L-methionine</name>
        <dbReference type="ChEBI" id="CHEBI:59789"/>
    </ligand>
</feature>
<feature type="binding site" evidence="1">
    <location>
        <position position="104"/>
    </location>
    <ligand>
        <name>S-adenosyl-L-methionine</name>
        <dbReference type="ChEBI" id="CHEBI:59789"/>
    </ligand>
</feature>
<feature type="binding site" evidence="1">
    <location>
        <begin position="123"/>
        <end position="128"/>
    </location>
    <ligand>
        <name>S-adenosyl-L-methionine</name>
        <dbReference type="ChEBI" id="CHEBI:59789"/>
    </ligand>
</feature>
<sequence length="156" mass="17427">MKLHIVAVGHKMPGWIASGFDEYAKRMPPELRIELREVKPELRSGSRTADSVMAAEQQRIEAALPKNARVVALDERGRDWTTMQLAQALPAWQQDGRDVAFVIGGADGLAPALKSRAELLLRVSSLTLPHGMVRVLLAEQLYRAWSITQNHPYHRA</sequence>
<proteinExistence type="inferred from homology"/>
<evidence type="ECO:0000255" key="1">
    <source>
        <dbReference type="HAMAP-Rule" id="MF_00658"/>
    </source>
</evidence>
<dbReference type="EC" id="2.1.1.177" evidence="1"/>
<dbReference type="EMBL" id="CP000546">
    <property type="protein sequence ID" value="ABN00611.1"/>
    <property type="molecule type" value="Genomic_DNA"/>
</dbReference>
<dbReference type="RefSeq" id="WP_004186098.1">
    <property type="nucleotide sequence ID" value="NC_008836.1"/>
</dbReference>
<dbReference type="SMR" id="A2S4B8"/>
<dbReference type="GeneID" id="93059640"/>
<dbReference type="KEGG" id="bml:BMA10229_A0797"/>
<dbReference type="HOGENOM" id="CLU_100552_1_0_4"/>
<dbReference type="Proteomes" id="UP000002283">
    <property type="component" value="Chromosome I"/>
</dbReference>
<dbReference type="GO" id="GO:0005737">
    <property type="term" value="C:cytoplasm"/>
    <property type="evidence" value="ECO:0007669"/>
    <property type="project" value="UniProtKB-SubCell"/>
</dbReference>
<dbReference type="GO" id="GO:0070038">
    <property type="term" value="F:rRNA (pseudouridine-N3-)-methyltransferase activity"/>
    <property type="evidence" value="ECO:0007669"/>
    <property type="project" value="UniProtKB-UniRule"/>
</dbReference>
<dbReference type="CDD" id="cd18081">
    <property type="entry name" value="RlmH-like"/>
    <property type="match status" value="1"/>
</dbReference>
<dbReference type="Gene3D" id="3.40.1280.10">
    <property type="match status" value="1"/>
</dbReference>
<dbReference type="HAMAP" id="MF_00658">
    <property type="entry name" value="23SrRNA_methyltr_H"/>
    <property type="match status" value="1"/>
</dbReference>
<dbReference type="InterPro" id="IPR029028">
    <property type="entry name" value="Alpha/beta_knot_MTases"/>
</dbReference>
<dbReference type="InterPro" id="IPR003742">
    <property type="entry name" value="RlmH-like"/>
</dbReference>
<dbReference type="InterPro" id="IPR029026">
    <property type="entry name" value="tRNA_m1G_MTases_N"/>
</dbReference>
<dbReference type="NCBIfam" id="NF000986">
    <property type="entry name" value="PRK00103.1-4"/>
    <property type="match status" value="1"/>
</dbReference>
<dbReference type="NCBIfam" id="TIGR00246">
    <property type="entry name" value="tRNA_RlmH_YbeA"/>
    <property type="match status" value="1"/>
</dbReference>
<dbReference type="PANTHER" id="PTHR33603">
    <property type="entry name" value="METHYLTRANSFERASE"/>
    <property type="match status" value="1"/>
</dbReference>
<dbReference type="PANTHER" id="PTHR33603:SF1">
    <property type="entry name" value="RIBOSOMAL RNA LARGE SUBUNIT METHYLTRANSFERASE H"/>
    <property type="match status" value="1"/>
</dbReference>
<dbReference type="Pfam" id="PF02590">
    <property type="entry name" value="SPOUT_MTase"/>
    <property type="match status" value="1"/>
</dbReference>
<dbReference type="PIRSF" id="PIRSF004505">
    <property type="entry name" value="MT_bac"/>
    <property type="match status" value="1"/>
</dbReference>
<dbReference type="SUPFAM" id="SSF75217">
    <property type="entry name" value="alpha/beta knot"/>
    <property type="match status" value="1"/>
</dbReference>
<protein>
    <recommendedName>
        <fullName evidence="1">Ribosomal RNA large subunit methyltransferase H</fullName>
        <ecNumber evidence="1">2.1.1.177</ecNumber>
    </recommendedName>
    <alternativeName>
        <fullName evidence="1">23S rRNA (pseudouridine1915-N3)-methyltransferase</fullName>
    </alternativeName>
    <alternativeName>
        <fullName evidence="1">23S rRNA m3Psi1915 methyltransferase</fullName>
    </alternativeName>
    <alternativeName>
        <fullName evidence="1">rRNA (pseudouridine-N3-)-methyltransferase RlmH</fullName>
    </alternativeName>
</protein>
<name>RLMH_BURM9</name>
<accession>A2S4B8</accession>
<comment type="function">
    <text evidence="1">Specifically methylates the pseudouridine at position 1915 (m3Psi1915) in 23S rRNA.</text>
</comment>
<comment type="catalytic activity">
    <reaction evidence="1">
        <text>pseudouridine(1915) in 23S rRNA + S-adenosyl-L-methionine = N(3)-methylpseudouridine(1915) in 23S rRNA + S-adenosyl-L-homocysteine + H(+)</text>
        <dbReference type="Rhea" id="RHEA:42752"/>
        <dbReference type="Rhea" id="RHEA-COMP:10221"/>
        <dbReference type="Rhea" id="RHEA-COMP:10222"/>
        <dbReference type="ChEBI" id="CHEBI:15378"/>
        <dbReference type="ChEBI" id="CHEBI:57856"/>
        <dbReference type="ChEBI" id="CHEBI:59789"/>
        <dbReference type="ChEBI" id="CHEBI:65314"/>
        <dbReference type="ChEBI" id="CHEBI:74486"/>
        <dbReference type="EC" id="2.1.1.177"/>
    </reaction>
</comment>
<comment type="subunit">
    <text evidence="1">Homodimer.</text>
</comment>
<comment type="subcellular location">
    <subcellularLocation>
        <location evidence="1">Cytoplasm</location>
    </subcellularLocation>
</comment>
<comment type="similarity">
    <text evidence="1">Belongs to the RNA methyltransferase RlmH family.</text>
</comment>
<keyword id="KW-0963">Cytoplasm</keyword>
<keyword id="KW-0489">Methyltransferase</keyword>
<keyword id="KW-0698">rRNA processing</keyword>
<keyword id="KW-0949">S-adenosyl-L-methionine</keyword>
<keyword id="KW-0808">Transferase</keyword>